<dbReference type="EMBL" id="CP001020">
    <property type="protein sequence ID" value="ACJ20934.1"/>
    <property type="molecule type" value="Genomic_DNA"/>
</dbReference>
<dbReference type="RefSeq" id="WP_005772112.1">
    <property type="nucleotide sequence ID" value="NC_011528.1"/>
</dbReference>
<dbReference type="KEGG" id="cbc:CbuK_1808"/>
<dbReference type="HOGENOM" id="CLU_032288_0_0_6"/>
<dbReference type="GO" id="GO:0005886">
    <property type="term" value="C:plasma membrane"/>
    <property type="evidence" value="ECO:0007669"/>
    <property type="project" value="UniProtKB-SubCell"/>
</dbReference>
<dbReference type="HAMAP" id="MF_00672">
    <property type="entry name" value="UPF0761"/>
    <property type="match status" value="1"/>
</dbReference>
<dbReference type="InterPro" id="IPR023679">
    <property type="entry name" value="UPF0761_bac"/>
</dbReference>
<dbReference type="InterPro" id="IPR017039">
    <property type="entry name" value="Virul_fac_BrkB"/>
</dbReference>
<dbReference type="NCBIfam" id="TIGR00765">
    <property type="entry name" value="yihY_not_rbn"/>
    <property type="match status" value="1"/>
</dbReference>
<dbReference type="PANTHER" id="PTHR30213">
    <property type="entry name" value="INNER MEMBRANE PROTEIN YHJD"/>
    <property type="match status" value="1"/>
</dbReference>
<dbReference type="PANTHER" id="PTHR30213:SF0">
    <property type="entry name" value="UPF0761 MEMBRANE PROTEIN YIHY"/>
    <property type="match status" value="1"/>
</dbReference>
<dbReference type="Pfam" id="PF03631">
    <property type="entry name" value="Virul_fac_BrkB"/>
    <property type="match status" value="1"/>
</dbReference>
<dbReference type="PIRSF" id="PIRSF035875">
    <property type="entry name" value="RNase_BN"/>
    <property type="match status" value="1"/>
</dbReference>
<accession>B6J517</accession>
<proteinExistence type="inferred from homology"/>
<gene>
    <name type="ordered locus">CbuK_1808</name>
</gene>
<organism>
    <name type="scientific">Coxiella burnetii (strain CbuK_Q154)</name>
    <name type="common">Coxiella burnetii (strain Q154)</name>
    <dbReference type="NCBI Taxonomy" id="434924"/>
    <lineage>
        <taxon>Bacteria</taxon>
        <taxon>Pseudomonadati</taxon>
        <taxon>Pseudomonadota</taxon>
        <taxon>Gammaproteobacteria</taxon>
        <taxon>Legionellales</taxon>
        <taxon>Coxiellaceae</taxon>
        <taxon>Coxiella</taxon>
    </lineage>
</organism>
<sequence>MTIYRFFKRSAFTLAYIYRRFHEEGCAYRATALAYTTLLALVPLTIVAFTLLSFVPAFQGVGVRLQNLIWENFVPTSAGMVAAYLSQLTQNVTGLSIINIFFLGIVALLLMYNINRAFVAIWHTEHHFRLSLHFLIYFMVLLLSPFLLGAVMLLGTFLVQSPLVTDLIGWPYLGKGLLFVLPYVLIFITFTLFNWVLPSAKVKLSHAVIGGLVTTVLFELAKFAFTVYLKFFPTYRVIYGALSVIPIFLVWLYVSWTIILLGAVVSNVIACGIPEKYK</sequence>
<name>Y1808_COXB1</name>
<reference key="1">
    <citation type="journal article" date="2009" name="Infect. Immun.">
        <title>Comparative genomics reveal extensive transposon-mediated genomic plasticity and diversity among potential effector proteins within the genus Coxiella.</title>
        <authorList>
            <person name="Beare P.A."/>
            <person name="Unsworth N."/>
            <person name="Andoh M."/>
            <person name="Voth D.E."/>
            <person name="Omsland A."/>
            <person name="Gilk S.D."/>
            <person name="Williams K.P."/>
            <person name="Sobral B.W."/>
            <person name="Kupko J.J. III"/>
            <person name="Porcella S.F."/>
            <person name="Samuel J.E."/>
            <person name="Heinzen R.A."/>
        </authorList>
    </citation>
    <scope>NUCLEOTIDE SEQUENCE [LARGE SCALE GENOMIC DNA]</scope>
    <source>
        <strain>CbuK_Q154</strain>
    </source>
</reference>
<protein>
    <recommendedName>
        <fullName evidence="1">UPF0761 membrane protein CbuK_1808</fullName>
    </recommendedName>
</protein>
<evidence type="ECO:0000255" key="1">
    <source>
        <dbReference type="HAMAP-Rule" id="MF_00672"/>
    </source>
</evidence>
<feature type="chain" id="PRO_1000131544" description="UPF0761 membrane protein CbuK_1808">
    <location>
        <begin position="1"/>
        <end position="278"/>
    </location>
</feature>
<feature type="transmembrane region" description="Helical" evidence="1">
    <location>
        <begin position="38"/>
        <end position="58"/>
    </location>
</feature>
<feature type="transmembrane region" description="Helical" evidence="1">
    <location>
        <begin position="68"/>
        <end position="88"/>
    </location>
</feature>
<feature type="transmembrane region" description="Helical" evidence="1">
    <location>
        <begin position="92"/>
        <end position="112"/>
    </location>
</feature>
<feature type="transmembrane region" description="Helical" evidence="1">
    <location>
        <begin position="134"/>
        <end position="154"/>
    </location>
</feature>
<feature type="transmembrane region" description="Helical" evidence="1">
    <location>
        <begin position="177"/>
        <end position="197"/>
    </location>
</feature>
<feature type="transmembrane region" description="Helical" evidence="1">
    <location>
        <begin position="207"/>
        <end position="227"/>
    </location>
</feature>
<feature type="transmembrane region" description="Helical" evidence="1">
    <location>
        <begin position="244"/>
        <end position="264"/>
    </location>
</feature>
<comment type="subcellular location">
    <subcellularLocation>
        <location evidence="1">Cell inner membrane</location>
        <topology evidence="1">Multi-pass membrane protein</topology>
    </subcellularLocation>
</comment>
<comment type="similarity">
    <text evidence="1">Belongs to the UPF0761 family.</text>
</comment>
<keyword id="KW-0997">Cell inner membrane</keyword>
<keyword id="KW-1003">Cell membrane</keyword>
<keyword id="KW-0472">Membrane</keyword>
<keyword id="KW-0812">Transmembrane</keyword>
<keyword id="KW-1133">Transmembrane helix</keyword>